<name>MED4_CRYNB</name>
<gene>
    <name type="primary">MED4</name>
    <name type="ordered locus">CNBF2980</name>
</gene>
<protein>
    <recommendedName>
        <fullName>Mediator of RNA polymerase II transcription subunit 4</fullName>
    </recommendedName>
    <alternativeName>
        <fullName>Mediator complex subunit 4</fullName>
    </alternativeName>
</protein>
<sequence>MAHTTPRSHPPPHSLLQNLTTQSLLLSHLFTLIASPPNPNTSTQTQLNQVYSALQLSTLDLSGLVKEVGHHQEAYRRLVEKKNEVAGLEMRVRGLVKRLEEGRKELEGMIDQGERSLEDIQKSEREPVPAKTLMAHAQSLSKHSSAPVSSLLAPVDKAQYAPWPTEMSMRMGLLFQLEGSMSGMGERGVVGEEQKAPQKVEERREHVEHEESGRRYDPNAVFQLDLNSDESDED</sequence>
<accession>P0CO73</accession>
<accession>Q55QP0</accession>
<accession>Q5KFH5</accession>
<feature type="chain" id="PRO_0000410143" description="Mediator of RNA polymerase II transcription subunit 4">
    <location>
        <begin position="1"/>
        <end position="234"/>
    </location>
</feature>
<feature type="region of interest" description="Disordered" evidence="3">
    <location>
        <begin position="188"/>
        <end position="234"/>
    </location>
</feature>
<feature type="coiled-coil region" evidence="2">
    <location>
        <begin position="71"/>
        <end position="124"/>
    </location>
</feature>
<feature type="compositionally biased region" description="Basic and acidic residues" evidence="3">
    <location>
        <begin position="189"/>
        <end position="217"/>
    </location>
</feature>
<proteinExistence type="inferred from homology"/>
<dbReference type="EMBL" id="AAEY01000032">
    <property type="protein sequence ID" value="EAL19971.1"/>
    <property type="molecule type" value="Genomic_DNA"/>
</dbReference>
<dbReference type="RefSeq" id="XP_774618.1">
    <property type="nucleotide sequence ID" value="XM_769525.1"/>
</dbReference>
<dbReference type="SMR" id="P0CO73"/>
<dbReference type="GeneID" id="4936850"/>
<dbReference type="KEGG" id="cnb:CNBF2980"/>
<dbReference type="VEuPathDB" id="FungiDB:CNBF2980"/>
<dbReference type="HOGENOM" id="CLU_1200540_0_0_1"/>
<dbReference type="OrthoDB" id="7482at5206"/>
<dbReference type="GO" id="GO:0070847">
    <property type="term" value="C:core mediator complex"/>
    <property type="evidence" value="ECO:0007669"/>
    <property type="project" value="TreeGrafter"/>
</dbReference>
<dbReference type="GO" id="GO:0016592">
    <property type="term" value="C:mediator complex"/>
    <property type="evidence" value="ECO:0007669"/>
    <property type="project" value="InterPro"/>
</dbReference>
<dbReference type="GO" id="GO:0003712">
    <property type="term" value="F:transcription coregulator activity"/>
    <property type="evidence" value="ECO:0007669"/>
    <property type="project" value="InterPro"/>
</dbReference>
<dbReference type="GO" id="GO:0006357">
    <property type="term" value="P:regulation of transcription by RNA polymerase II"/>
    <property type="evidence" value="ECO:0007669"/>
    <property type="project" value="InterPro"/>
</dbReference>
<dbReference type="InterPro" id="IPR019258">
    <property type="entry name" value="Mediator_Med4"/>
</dbReference>
<dbReference type="PANTHER" id="PTHR13208">
    <property type="entry name" value="MEDIATOR OF RNA POLYMERASE II TRANSCRIPTION SUBUNIT 4"/>
    <property type="match status" value="1"/>
</dbReference>
<dbReference type="PANTHER" id="PTHR13208:SF2">
    <property type="entry name" value="MEDIATOR OF RNA POLYMERASE II TRANSCRIPTION SUBUNIT 4"/>
    <property type="match status" value="1"/>
</dbReference>
<dbReference type="Pfam" id="PF10018">
    <property type="entry name" value="Med4"/>
    <property type="match status" value="1"/>
</dbReference>
<evidence type="ECO:0000250" key="1"/>
<evidence type="ECO:0000255" key="2"/>
<evidence type="ECO:0000256" key="3">
    <source>
        <dbReference type="SAM" id="MobiDB-lite"/>
    </source>
</evidence>
<evidence type="ECO:0000305" key="4"/>
<comment type="function">
    <text evidence="1">Component of the Mediator complex, a coactivator involved in the regulated transcription of nearly all RNA polymerase II-dependent genes. Mediator functions as a bridge to convey information from gene-specific regulatory proteins to the basal RNA polymerase II transcription machinery. Mediator is recruited to promoters by direct interactions with regulatory proteins and serves as a scaffold for the assembly of a functional preinitiation complex with RNA polymerase II and the general transcription factors (By similarity).</text>
</comment>
<comment type="subunit">
    <text evidence="1">Component of the Mediator complex.</text>
</comment>
<comment type="subcellular location">
    <subcellularLocation>
        <location evidence="1">Nucleus</location>
    </subcellularLocation>
</comment>
<comment type="similarity">
    <text evidence="4">Belongs to the Mediator complex subunit 4 family.</text>
</comment>
<reference key="1">
    <citation type="journal article" date="2005" name="Science">
        <title>The genome of the basidiomycetous yeast and human pathogen Cryptococcus neoformans.</title>
        <authorList>
            <person name="Loftus B.J."/>
            <person name="Fung E."/>
            <person name="Roncaglia P."/>
            <person name="Rowley D."/>
            <person name="Amedeo P."/>
            <person name="Bruno D."/>
            <person name="Vamathevan J."/>
            <person name="Miranda M."/>
            <person name="Anderson I.J."/>
            <person name="Fraser J.A."/>
            <person name="Allen J.E."/>
            <person name="Bosdet I.E."/>
            <person name="Brent M.R."/>
            <person name="Chiu R."/>
            <person name="Doering T.L."/>
            <person name="Donlin M.J."/>
            <person name="D'Souza C.A."/>
            <person name="Fox D.S."/>
            <person name="Grinberg V."/>
            <person name="Fu J."/>
            <person name="Fukushima M."/>
            <person name="Haas B.J."/>
            <person name="Huang J.C."/>
            <person name="Janbon G."/>
            <person name="Jones S.J.M."/>
            <person name="Koo H.L."/>
            <person name="Krzywinski M.I."/>
            <person name="Kwon-Chung K.J."/>
            <person name="Lengeler K.B."/>
            <person name="Maiti R."/>
            <person name="Marra M.A."/>
            <person name="Marra R.E."/>
            <person name="Mathewson C.A."/>
            <person name="Mitchell T.G."/>
            <person name="Pertea M."/>
            <person name="Riggs F.R."/>
            <person name="Salzberg S.L."/>
            <person name="Schein J.E."/>
            <person name="Shvartsbeyn A."/>
            <person name="Shin H."/>
            <person name="Shumway M."/>
            <person name="Specht C.A."/>
            <person name="Suh B.B."/>
            <person name="Tenney A."/>
            <person name="Utterback T.R."/>
            <person name="Wickes B.L."/>
            <person name="Wortman J.R."/>
            <person name="Wye N.H."/>
            <person name="Kronstad J.W."/>
            <person name="Lodge J.K."/>
            <person name="Heitman J."/>
            <person name="Davis R.W."/>
            <person name="Fraser C.M."/>
            <person name="Hyman R.W."/>
        </authorList>
    </citation>
    <scope>NUCLEOTIDE SEQUENCE [LARGE SCALE GENOMIC DNA]</scope>
    <source>
        <strain>B-3501A</strain>
    </source>
</reference>
<organism>
    <name type="scientific">Cryptococcus neoformans var. neoformans serotype D (strain B-3501A)</name>
    <name type="common">Filobasidiella neoformans</name>
    <dbReference type="NCBI Taxonomy" id="283643"/>
    <lineage>
        <taxon>Eukaryota</taxon>
        <taxon>Fungi</taxon>
        <taxon>Dikarya</taxon>
        <taxon>Basidiomycota</taxon>
        <taxon>Agaricomycotina</taxon>
        <taxon>Tremellomycetes</taxon>
        <taxon>Tremellales</taxon>
        <taxon>Cryptococcaceae</taxon>
        <taxon>Cryptococcus</taxon>
        <taxon>Cryptococcus neoformans species complex</taxon>
    </lineage>
</organism>
<keyword id="KW-0010">Activator</keyword>
<keyword id="KW-0175">Coiled coil</keyword>
<keyword id="KW-0539">Nucleus</keyword>
<keyword id="KW-0804">Transcription</keyword>
<keyword id="KW-0805">Transcription regulation</keyword>